<organism>
    <name type="scientific">Salmonella typhimurium (strain SL1344)</name>
    <dbReference type="NCBI Taxonomy" id="216597"/>
    <lineage>
        <taxon>Bacteria</taxon>
        <taxon>Pseudomonadati</taxon>
        <taxon>Pseudomonadota</taxon>
        <taxon>Gammaproteobacteria</taxon>
        <taxon>Enterobacterales</taxon>
        <taxon>Enterobacteriaceae</taxon>
        <taxon>Salmonella</taxon>
    </lineage>
</organism>
<gene>
    <name type="primary">galR</name>
    <name type="ordered locus">SL1344_2989</name>
</gene>
<accession>E1WAQ4</accession>
<accession>P74866</accession>
<feature type="chain" id="PRO_0000405422" description="HTH-type transcriptional regulator GalR">
    <location>
        <begin position="1"/>
        <end position="342"/>
    </location>
</feature>
<feature type="domain" description="HTH lacI-type" evidence="2">
    <location>
        <begin position="1"/>
        <end position="56"/>
    </location>
</feature>
<feature type="DNA-binding region" description="H-T-H motif" evidence="2">
    <location>
        <begin position="4"/>
        <end position="23"/>
    </location>
</feature>
<proteinExistence type="inferred from homology"/>
<protein>
    <recommendedName>
        <fullName>HTH-type transcriptional regulator GalR</fullName>
    </recommendedName>
    <alternativeName>
        <fullName>Galactose operon repressor</fullName>
    </alternativeName>
</protein>
<reference key="1">
    <citation type="journal article" date="2012" name="Proc. Natl. Acad. Sci. U.S.A.">
        <title>The transcriptional landscape and small RNAs of Salmonella enterica serovar Typhimurium.</title>
        <authorList>
            <person name="Kroger C."/>
            <person name="Dillon S.C."/>
            <person name="Cameron A.D."/>
            <person name="Papenfort K."/>
            <person name="Sivasankaran S.K."/>
            <person name="Hokamp K."/>
            <person name="Chao Y."/>
            <person name="Sittka A."/>
            <person name="Hebrard M."/>
            <person name="Handler K."/>
            <person name="Colgan A."/>
            <person name="Leekitcharoenphon P."/>
            <person name="Langridge G.C."/>
            <person name="Lohan A.J."/>
            <person name="Loftus B."/>
            <person name="Lucchini S."/>
            <person name="Ussery D.W."/>
            <person name="Dorman C.J."/>
            <person name="Thomson N.R."/>
            <person name="Vogel J."/>
            <person name="Hinton J.C."/>
        </authorList>
    </citation>
    <scope>NUCLEOTIDE SEQUENCE [LARGE SCALE GENOMIC DNA]</scope>
    <source>
        <strain>SL1344</strain>
    </source>
</reference>
<reference key="2">
    <citation type="journal article" date="1996" name="Mol. Microbiol.">
        <title>Bacterial genetics by flow cytometry: rapid isolation of Salmonella typhimurium acid-inducible promoters by differential fluorescence induction.</title>
        <authorList>
            <person name="Valdivia R.H."/>
            <person name="Falkow S."/>
        </authorList>
    </citation>
    <scope>NUCLEOTIDE SEQUENCE [GENOMIC DNA] OF 1-71</scope>
    <source>
        <strain>SL1344</strain>
    </source>
</reference>
<comment type="function">
    <text evidence="1">Repressor of the galactose operon. Binds galactose as an inducer (By similarity).</text>
</comment>
<comment type="pathway">
    <text>Carbohydrate metabolism; galactose metabolism [regulation].</text>
</comment>
<comment type="subunit">
    <text evidence="1">Homodimer.</text>
</comment>
<dbReference type="EMBL" id="FQ312003">
    <property type="protein sequence ID" value="CBW19088.1"/>
    <property type="molecule type" value="Genomic_DNA"/>
</dbReference>
<dbReference type="EMBL" id="U62708">
    <property type="protein sequence ID" value="AAC44601.1"/>
    <property type="molecule type" value="Genomic_DNA"/>
</dbReference>
<dbReference type="RefSeq" id="WP_000201030.1">
    <property type="nucleotide sequence ID" value="NZ_QASL01000005.1"/>
</dbReference>
<dbReference type="SMR" id="E1WAQ4"/>
<dbReference type="KEGG" id="sey:SL1344_2989"/>
<dbReference type="PATRIC" id="fig|216597.6.peg.3333"/>
<dbReference type="HOGENOM" id="CLU_037628_6_0_6"/>
<dbReference type="BioCyc" id="SENT216597:SL1344_RS15580-MONOMER"/>
<dbReference type="UniPathway" id="UPA00214"/>
<dbReference type="Proteomes" id="UP000008962">
    <property type="component" value="Chromosome"/>
</dbReference>
<dbReference type="GO" id="GO:0003700">
    <property type="term" value="F:DNA-binding transcription factor activity"/>
    <property type="evidence" value="ECO:0007669"/>
    <property type="project" value="TreeGrafter"/>
</dbReference>
<dbReference type="GO" id="GO:0000976">
    <property type="term" value="F:transcription cis-regulatory region binding"/>
    <property type="evidence" value="ECO:0007669"/>
    <property type="project" value="TreeGrafter"/>
</dbReference>
<dbReference type="GO" id="GO:0006012">
    <property type="term" value="P:galactose metabolic process"/>
    <property type="evidence" value="ECO:0007669"/>
    <property type="project" value="UniProtKB-UniPathway"/>
</dbReference>
<dbReference type="CDD" id="cd01392">
    <property type="entry name" value="HTH_LacI"/>
    <property type="match status" value="1"/>
</dbReference>
<dbReference type="CDD" id="cd06270">
    <property type="entry name" value="PBP1_GalS-like"/>
    <property type="match status" value="1"/>
</dbReference>
<dbReference type="FunFam" id="3.40.50.2300:FF:000027">
    <property type="entry name" value="HTH-type transcriptional regulator GalR"/>
    <property type="match status" value="1"/>
</dbReference>
<dbReference type="FunFam" id="3.40.50.2300:FF:000048">
    <property type="entry name" value="HTH-type transcriptional regulator GalR"/>
    <property type="match status" value="1"/>
</dbReference>
<dbReference type="Gene3D" id="3.40.50.2300">
    <property type="match status" value="2"/>
</dbReference>
<dbReference type="Gene3D" id="1.10.260.40">
    <property type="entry name" value="lambda repressor-like DNA-binding domains"/>
    <property type="match status" value="1"/>
</dbReference>
<dbReference type="InterPro" id="IPR000843">
    <property type="entry name" value="HTH_LacI"/>
</dbReference>
<dbReference type="InterPro" id="IPR046335">
    <property type="entry name" value="LacI/GalR-like_sensor"/>
</dbReference>
<dbReference type="InterPro" id="IPR010982">
    <property type="entry name" value="Lambda_DNA-bd_dom_sf"/>
</dbReference>
<dbReference type="InterPro" id="IPR028082">
    <property type="entry name" value="Peripla_BP_I"/>
</dbReference>
<dbReference type="NCBIfam" id="NF008002">
    <property type="entry name" value="PRK10727.1"/>
    <property type="match status" value="1"/>
</dbReference>
<dbReference type="PANTHER" id="PTHR30146:SF98">
    <property type="entry name" value="HTH-TYPE TRANSCRIPTIONAL REGULATOR GALR"/>
    <property type="match status" value="1"/>
</dbReference>
<dbReference type="PANTHER" id="PTHR30146">
    <property type="entry name" value="LACI-RELATED TRANSCRIPTIONAL REPRESSOR"/>
    <property type="match status" value="1"/>
</dbReference>
<dbReference type="Pfam" id="PF00356">
    <property type="entry name" value="LacI"/>
    <property type="match status" value="1"/>
</dbReference>
<dbReference type="Pfam" id="PF13377">
    <property type="entry name" value="Peripla_BP_3"/>
    <property type="match status" value="1"/>
</dbReference>
<dbReference type="PRINTS" id="PR00036">
    <property type="entry name" value="HTHLACI"/>
</dbReference>
<dbReference type="SMART" id="SM00354">
    <property type="entry name" value="HTH_LACI"/>
    <property type="match status" value="1"/>
</dbReference>
<dbReference type="SUPFAM" id="SSF47413">
    <property type="entry name" value="lambda repressor-like DNA-binding domains"/>
    <property type="match status" value="1"/>
</dbReference>
<dbReference type="SUPFAM" id="SSF53822">
    <property type="entry name" value="Periplasmic binding protein-like I"/>
    <property type="match status" value="1"/>
</dbReference>
<dbReference type="PROSITE" id="PS00356">
    <property type="entry name" value="HTH_LACI_1"/>
    <property type="match status" value="1"/>
</dbReference>
<dbReference type="PROSITE" id="PS50932">
    <property type="entry name" value="HTH_LACI_2"/>
    <property type="match status" value="1"/>
</dbReference>
<keyword id="KW-0119">Carbohydrate metabolism</keyword>
<keyword id="KW-0238">DNA-binding</keyword>
<keyword id="KW-0299">Galactose metabolism</keyword>
<keyword id="KW-0678">Repressor</keyword>
<keyword id="KW-0804">Transcription</keyword>
<keyword id="KW-0805">Transcription regulation</keyword>
<sequence>MATIKDVARLAGVSVATVSRVINDSPKASEASRLAVTSAMESLSYHPNANARALAQQATETLGLVVGDVSDPFFGAMVKAVEQVAYHTGNFLLIGNGYHNEQKERQAIEQLIRHRCAALVVHAKMIPDADLASLMKQIPGMVLINRILPGLEHRCVALDDRYGAWLATRHLIQQGHTRIGYICSNHTISDAEDRLRGYYDALAESHIPANDRLVTFGEPDESGGEQAMTELLGRGRNFTAVACYNDSMAAGAMGVLNDNGVGVPGEVSLIGFDDVLVSRYVRPRLTTIRYPIVTMATQAAELALALAGKCPTPEVTHVFSPTLVRRHSVSTPTDTGHLSTTD</sequence>
<name>GALR_SALTS</name>
<evidence type="ECO:0000250" key="1"/>
<evidence type="ECO:0000255" key="2">
    <source>
        <dbReference type="PROSITE-ProRule" id="PRU00111"/>
    </source>
</evidence>